<name>GPDA_TREPS</name>
<gene>
    <name evidence="1" type="primary">gpsA</name>
    <name type="ordered locus">TPASS_1009</name>
</gene>
<protein>
    <recommendedName>
        <fullName evidence="1">Glycerol-3-phosphate dehydrogenase [NAD(P)+]</fullName>
        <ecNumber evidence="1">1.1.1.94</ecNumber>
    </recommendedName>
    <alternativeName>
        <fullName evidence="1">NAD(P)(+)-dependent glycerol-3-phosphate dehydrogenase</fullName>
    </alternativeName>
    <alternativeName>
        <fullName evidence="1">NAD(P)H-dependent dihydroxyacetone-phosphate reductase</fullName>
    </alternativeName>
</protein>
<reference key="1">
    <citation type="journal article" date="2008" name="BMC Microbiol.">
        <title>Complete genome sequence of Treponema pallidum ssp. pallidum strain SS14 determined with oligonucleotide arrays.</title>
        <authorList>
            <person name="Matejkova P."/>
            <person name="Strouhal M."/>
            <person name="Smajs D."/>
            <person name="Norris S.J."/>
            <person name="Palzkill T."/>
            <person name="Petrosino J.F."/>
            <person name="Sodergren E."/>
            <person name="Norton J.E."/>
            <person name="Singh J."/>
            <person name="Richmond T.A."/>
            <person name="Molla M.N."/>
            <person name="Albert T.J."/>
            <person name="Weinstock G.M."/>
        </authorList>
    </citation>
    <scope>NUCLEOTIDE SEQUENCE [LARGE SCALE GENOMIC DNA]</scope>
    <source>
        <strain>SS14</strain>
    </source>
</reference>
<keyword id="KW-0963">Cytoplasm</keyword>
<keyword id="KW-0444">Lipid biosynthesis</keyword>
<keyword id="KW-0443">Lipid metabolism</keyword>
<keyword id="KW-0520">NAD</keyword>
<keyword id="KW-0521">NADP</keyword>
<keyword id="KW-0547">Nucleotide-binding</keyword>
<keyword id="KW-0560">Oxidoreductase</keyword>
<keyword id="KW-0594">Phospholipid biosynthesis</keyword>
<keyword id="KW-1208">Phospholipid metabolism</keyword>
<dbReference type="EC" id="1.1.1.94" evidence="1"/>
<dbReference type="EMBL" id="CP000805">
    <property type="protein sequence ID" value="ACD71425.1"/>
    <property type="molecule type" value="Genomic_DNA"/>
</dbReference>
<dbReference type="RefSeq" id="WP_010882453.1">
    <property type="nucleotide sequence ID" value="NC_021508.1"/>
</dbReference>
<dbReference type="SMR" id="B2S4P6"/>
<dbReference type="KEGG" id="tpp:TPASS_1009"/>
<dbReference type="PATRIC" id="fig|455434.6.peg.997"/>
<dbReference type="UniPathway" id="UPA00940"/>
<dbReference type="Proteomes" id="UP000001202">
    <property type="component" value="Chromosome"/>
</dbReference>
<dbReference type="GO" id="GO:0005829">
    <property type="term" value="C:cytosol"/>
    <property type="evidence" value="ECO:0007669"/>
    <property type="project" value="TreeGrafter"/>
</dbReference>
<dbReference type="GO" id="GO:0047952">
    <property type="term" value="F:glycerol-3-phosphate dehydrogenase [NAD(P)+] activity"/>
    <property type="evidence" value="ECO:0007669"/>
    <property type="project" value="UniProtKB-UniRule"/>
</dbReference>
<dbReference type="GO" id="GO:0051287">
    <property type="term" value="F:NAD binding"/>
    <property type="evidence" value="ECO:0007669"/>
    <property type="project" value="InterPro"/>
</dbReference>
<dbReference type="GO" id="GO:0005975">
    <property type="term" value="P:carbohydrate metabolic process"/>
    <property type="evidence" value="ECO:0007669"/>
    <property type="project" value="InterPro"/>
</dbReference>
<dbReference type="GO" id="GO:0046167">
    <property type="term" value="P:glycerol-3-phosphate biosynthetic process"/>
    <property type="evidence" value="ECO:0007669"/>
    <property type="project" value="UniProtKB-UniRule"/>
</dbReference>
<dbReference type="GO" id="GO:0046168">
    <property type="term" value="P:glycerol-3-phosphate catabolic process"/>
    <property type="evidence" value="ECO:0007669"/>
    <property type="project" value="InterPro"/>
</dbReference>
<dbReference type="GO" id="GO:0006650">
    <property type="term" value="P:glycerophospholipid metabolic process"/>
    <property type="evidence" value="ECO:0007669"/>
    <property type="project" value="UniProtKB-UniRule"/>
</dbReference>
<dbReference type="GO" id="GO:0008654">
    <property type="term" value="P:phospholipid biosynthetic process"/>
    <property type="evidence" value="ECO:0007669"/>
    <property type="project" value="UniProtKB-KW"/>
</dbReference>
<dbReference type="Gene3D" id="1.10.1040.10">
    <property type="entry name" value="N-(1-d-carboxylethyl)-l-norvaline Dehydrogenase, domain 2"/>
    <property type="match status" value="1"/>
</dbReference>
<dbReference type="Gene3D" id="3.40.50.720">
    <property type="entry name" value="NAD(P)-binding Rossmann-like Domain"/>
    <property type="match status" value="1"/>
</dbReference>
<dbReference type="HAMAP" id="MF_00394">
    <property type="entry name" value="NAD_Glyc3P_dehydrog"/>
    <property type="match status" value="1"/>
</dbReference>
<dbReference type="InterPro" id="IPR008927">
    <property type="entry name" value="6-PGluconate_DH-like_C_sf"/>
</dbReference>
<dbReference type="InterPro" id="IPR013328">
    <property type="entry name" value="6PGD_dom2"/>
</dbReference>
<dbReference type="InterPro" id="IPR006168">
    <property type="entry name" value="G3P_DH_NAD-dep"/>
</dbReference>
<dbReference type="InterPro" id="IPR006109">
    <property type="entry name" value="G3P_DH_NAD-dep_C"/>
</dbReference>
<dbReference type="InterPro" id="IPR011128">
    <property type="entry name" value="G3P_DH_NAD-dep_N"/>
</dbReference>
<dbReference type="InterPro" id="IPR036291">
    <property type="entry name" value="NAD(P)-bd_dom_sf"/>
</dbReference>
<dbReference type="NCBIfam" id="NF000940">
    <property type="entry name" value="PRK00094.1-2"/>
    <property type="match status" value="1"/>
</dbReference>
<dbReference type="NCBIfam" id="NF000942">
    <property type="entry name" value="PRK00094.1-4"/>
    <property type="match status" value="1"/>
</dbReference>
<dbReference type="PANTHER" id="PTHR11728">
    <property type="entry name" value="GLYCEROL-3-PHOSPHATE DEHYDROGENASE"/>
    <property type="match status" value="1"/>
</dbReference>
<dbReference type="PANTHER" id="PTHR11728:SF1">
    <property type="entry name" value="GLYCEROL-3-PHOSPHATE DEHYDROGENASE [NAD(+)] 2, CHLOROPLASTIC"/>
    <property type="match status" value="1"/>
</dbReference>
<dbReference type="Pfam" id="PF07479">
    <property type="entry name" value="NAD_Gly3P_dh_C"/>
    <property type="match status" value="1"/>
</dbReference>
<dbReference type="Pfam" id="PF01210">
    <property type="entry name" value="NAD_Gly3P_dh_N"/>
    <property type="match status" value="1"/>
</dbReference>
<dbReference type="PIRSF" id="PIRSF000114">
    <property type="entry name" value="Glycerol-3-P_dh"/>
    <property type="match status" value="1"/>
</dbReference>
<dbReference type="PRINTS" id="PR00077">
    <property type="entry name" value="GPDHDRGNASE"/>
</dbReference>
<dbReference type="SUPFAM" id="SSF48179">
    <property type="entry name" value="6-phosphogluconate dehydrogenase C-terminal domain-like"/>
    <property type="match status" value="1"/>
</dbReference>
<dbReference type="SUPFAM" id="SSF51735">
    <property type="entry name" value="NAD(P)-binding Rossmann-fold domains"/>
    <property type="match status" value="1"/>
</dbReference>
<dbReference type="PROSITE" id="PS00957">
    <property type="entry name" value="NAD_G3PDH"/>
    <property type="match status" value="1"/>
</dbReference>
<proteinExistence type="inferred from homology"/>
<sequence>MASIAILGGGAWGTALAASLTVNGHTVMLWARRRQTCDAINARNENVQYLPGITLPAALCASPDMAYVCAGADLIVLAVPSCYLAEVAALMNTTPRFQRLRTAAVGQEYPLIGILTKGFIPDQEGMPHLITDALGALLPSGAHGQLVYISGPSHAQEVAQGKVTGLIAASQNPMAAIRVRELLRSKRVQVYSSLDVVGVQVCAAVKNVIAIAFGLLDAMAEHSEAFGDNTESMLLAAGLNEIQTIGKQLGSTHPETFTSLAGIGDLDVTCRSAYGRNRRFGRDIVHKGILDSFSGIQDLVSRLPEVGYLAEGVVACMHVQRLAERDRLKVPICAGLYAILNREKGADTFMQEILGW</sequence>
<organism>
    <name type="scientific">Treponema pallidum subsp. pallidum (strain SS14)</name>
    <dbReference type="NCBI Taxonomy" id="455434"/>
    <lineage>
        <taxon>Bacteria</taxon>
        <taxon>Pseudomonadati</taxon>
        <taxon>Spirochaetota</taxon>
        <taxon>Spirochaetia</taxon>
        <taxon>Spirochaetales</taxon>
        <taxon>Treponemataceae</taxon>
        <taxon>Treponema</taxon>
    </lineage>
</organism>
<accession>B2S4P6</accession>
<evidence type="ECO:0000255" key="1">
    <source>
        <dbReference type="HAMAP-Rule" id="MF_00394"/>
    </source>
</evidence>
<comment type="function">
    <text evidence="1">Catalyzes the reduction of the glycolytic intermediate dihydroxyacetone phosphate (DHAP) to sn-glycerol 3-phosphate (G3P), the key precursor for phospholipid synthesis.</text>
</comment>
<comment type="catalytic activity">
    <reaction evidence="1">
        <text>sn-glycerol 3-phosphate + NAD(+) = dihydroxyacetone phosphate + NADH + H(+)</text>
        <dbReference type="Rhea" id="RHEA:11092"/>
        <dbReference type="ChEBI" id="CHEBI:15378"/>
        <dbReference type="ChEBI" id="CHEBI:57540"/>
        <dbReference type="ChEBI" id="CHEBI:57597"/>
        <dbReference type="ChEBI" id="CHEBI:57642"/>
        <dbReference type="ChEBI" id="CHEBI:57945"/>
        <dbReference type="EC" id="1.1.1.94"/>
    </reaction>
    <physiologicalReaction direction="right-to-left" evidence="1">
        <dbReference type="Rhea" id="RHEA:11094"/>
    </physiologicalReaction>
</comment>
<comment type="catalytic activity">
    <reaction evidence="1">
        <text>sn-glycerol 3-phosphate + NADP(+) = dihydroxyacetone phosphate + NADPH + H(+)</text>
        <dbReference type="Rhea" id="RHEA:11096"/>
        <dbReference type="ChEBI" id="CHEBI:15378"/>
        <dbReference type="ChEBI" id="CHEBI:57597"/>
        <dbReference type="ChEBI" id="CHEBI:57642"/>
        <dbReference type="ChEBI" id="CHEBI:57783"/>
        <dbReference type="ChEBI" id="CHEBI:58349"/>
        <dbReference type="EC" id="1.1.1.94"/>
    </reaction>
    <physiologicalReaction direction="right-to-left" evidence="1">
        <dbReference type="Rhea" id="RHEA:11098"/>
    </physiologicalReaction>
</comment>
<comment type="pathway">
    <text evidence="1">Membrane lipid metabolism; glycerophospholipid metabolism.</text>
</comment>
<comment type="subcellular location">
    <subcellularLocation>
        <location evidence="1">Cytoplasm</location>
    </subcellularLocation>
</comment>
<comment type="similarity">
    <text evidence="1">Belongs to the NAD-dependent glycerol-3-phosphate dehydrogenase family.</text>
</comment>
<feature type="chain" id="PRO_1000123201" description="Glycerol-3-phosphate dehydrogenase [NAD(P)+]">
    <location>
        <begin position="1"/>
        <end position="356"/>
    </location>
</feature>
<feature type="active site" description="Proton acceptor" evidence="1">
    <location>
        <position position="206"/>
    </location>
</feature>
<feature type="binding site" evidence="1">
    <location>
        <position position="12"/>
    </location>
    <ligand>
        <name>NADPH</name>
        <dbReference type="ChEBI" id="CHEBI:57783"/>
    </ligand>
</feature>
<feature type="binding site" evidence="1">
    <location>
        <position position="32"/>
    </location>
    <ligand>
        <name>NADPH</name>
        <dbReference type="ChEBI" id="CHEBI:57783"/>
    </ligand>
</feature>
<feature type="binding site" evidence="1">
    <location>
        <position position="33"/>
    </location>
    <ligand>
        <name>NADPH</name>
        <dbReference type="ChEBI" id="CHEBI:57783"/>
    </ligand>
</feature>
<feature type="binding site" evidence="1">
    <location>
        <position position="117"/>
    </location>
    <ligand>
        <name>NADPH</name>
        <dbReference type="ChEBI" id="CHEBI:57783"/>
    </ligand>
</feature>
<feature type="binding site" evidence="1">
    <location>
        <position position="117"/>
    </location>
    <ligand>
        <name>sn-glycerol 3-phosphate</name>
        <dbReference type="ChEBI" id="CHEBI:57597"/>
    </ligand>
</feature>
<feature type="binding site" evidence="1">
    <location>
        <position position="151"/>
    </location>
    <ligand>
        <name>sn-glycerol 3-phosphate</name>
        <dbReference type="ChEBI" id="CHEBI:57597"/>
    </ligand>
</feature>
<feature type="binding site" evidence="1">
    <location>
        <position position="153"/>
    </location>
    <ligand>
        <name>sn-glycerol 3-phosphate</name>
        <dbReference type="ChEBI" id="CHEBI:57597"/>
    </ligand>
</feature>
<feature type="binding site" evidence="1">
    <location>
        <position position="155"/>
    </location>
    <ligand>
        <name>NADPH</name>
        <dbReference type="ChEBI" id="CHEBI:57783"/>
    </ligand>
</feature>
<feature type="binding site" evidence="1">
    <location>
        <position position="206"/>
    </location>
    <ligand>
        <name>sn-glycerol 3-phosphate</name>
        <dbReference type="ChEBI" id="CHEBI:57597"/>
    </ligand>
</feature>
<feature type="binding site" evidence="1">
    <location>
        <position position="265"/>
    </location>
    <ligand>
        <name>sn-glycerol 3-phosphate</name>
        <dbReference type="ChEBI" id="CHEBI:57597"/>
    </ligand>
</feature>
<feature type="binding site" evidence="1">
    <location>
        <position position="276"/>
    </location>
    <ligand>
        <name>NADPH</name>
        <dbReference type="ChEBI" id="CHEBI:57783"/>
    </ligand>
</feature>
<feature type="binding site" evidence="1">
    <location>
        <position position="276"/>
    </location>
    <ligand>
        <name>sn-glycerol 3-phosphate</name>
        <dbReference type="ChEBI" id="CHEBI:57597"/>
    </ligand>
</feature>
<feature type="binding site" evidence="1">
    <location>
        <position position="277"/>
    </location>
    <ligand>
        <name>sn-glycerol 3-phosphate</name>
        <dbReference type="ChEBI" id="CHEBI:57597"/>
    </ligand>
</feature>
<feature type="binding site" evidence="1">
    <location>
        <position position="309"/>
    </location>
    <ligand>
        <name>NADPH</name>
        <dbReference type="ChEBI" id="CHEBI:57783"/>
    </ligand>
</feature>
<feature type="binding site" evidence="1">
    <location>
        <position position="311"/>
    </location>
    <ligand>
        <name>NADPH</name>
        <dbReference type="ChEBI" id="CHEBI:57783"/>
    </ligand>
</feature>